<reference key="1">
    <citation type="journal article" date="1991" name="Mol. Microbiol.">
        <title>DNA sequence and analysis of the bet genes encoding the osmoregulatory choline-glycine betaine pathway of Escherichia coli.</title>
        <authorList>
            <person name="Lamark T."/>
            <person name="Kaasen E."/>
            <person name="Eshoo M.W."/>
            <person name="Falkenberg P."/>
            <person name="McDougall J."/>
            <person name="Strom A.R."/>
        </authorList>
    </citation>
    <scope>NUCLEOTIDE SEQUENCE [GENOMIC DNA]</scope>
    <source>
        <strain>K12</strain>
    </source>
</reference>
<reference key="2">
    <citation type="submission" date="1997-01" db="EMBL/GenBank/DDBJ databases">
        <title>Sequence of minutes 4-25 of Escherichia coli.</title>
        <authorList>
            <person name="Chung E."/>
            <person name="Allen E."/>
            <person name="Araujo R."/>
            <person name="Aparicio A.M."/>
            <person name="Davis K."/>
            <person name="Duncan M."/>
            <person name="Federspiel N."/>
            <person name="Hyman R."/>
            <person name="Kalman S."/>
            <person name="Komp C."/>
            <person name="Kurdi O."/>
            <person name="Lew H."/>
            <person name="Lin D."/>
            <person name="Namath A."/>
            <person name="Oefner P."/>
            <person name="Roberts D."/>
            <person name="Schramm S."/>
            <person name="Davis R.W."/>
        </authorList>
    </citation>
    <scope>NUCLEOTIDE SEQUENCE [LARGE SCALE GENOMIC DNA]</scope>
    <source>
        <strain>K12 / MG1655 / ATCC 47076</strain>
    </source>
</reference>
<reference key="3">
    <citation type="journal article" date="1997" name="Science">
        <title>The complete genome sequence of Escherichia coli K-12.</title>
        <authorList>
            <person name="Blattner F.R."/>
            <person name="Plunkett G. III"/>
            <person name="Bloch C.A."/>
            <person name="Perna N.T."/>
            <person name="Burland V."/>
            <person name="Riley M."/>
            <person name="Collado-Vides J."/>
            <person name="Glasner J.D."/>
            <person name="Rode C.K."/>
            <person name="Mayhew G.F."/>
            <person name="Gregor J."/>
            <person name="Davis N.W."/>
            <person name="Kirkpatrick H.A."/>
            <person name="Goeden M.A."/>
            <person name="Rose D.J."/>
            <person name="Mau B."/>
            <person name="Shao Y."/>
        </authorList>
    </citation>
    <scope>NUCLEOTIDE SEQUENCE [LARGE SCALE GENOMIC DNA]</scope>
    <source>
        <strain>K12 / MG1655 / ATCC 47076</strain>
    </source>
</reference>
<reference key="4">
    <citation type="journal article" date="2006" name="Mol. Syst. Biol.">
        <title>Highly accurate genome sequences of Escherichia coli K-12 strains MG1655 and W3110.</title>
        <authorList>
            <person name="Hayashi K."/>
            <person name="Morooka N."/>
            <person name="Yamamoto Y."/>
            <person name="Fujita K."/>
            <person name="Isono K."/>
            <person name="Choi S."/>
            <person name="Ohtsubo E."/>
            <person name="Baba T."/>
            <person name="Wanner B.L."/>
            <person name="Mori H."/>
            <person name="Horiuchi T."/>
        </authorList>
    </citation>
    <scope>NUCLEOTIDE SEQUENCE [LARGE SCALE GENOMIC DNA]</scope>
    <source>
        <strain>K12 / W3110 / ATCC 27325 / DSM 5911</strain>
    </source>
</reference>
<reference key="5">
    <citation type="journal article" date="1996" name="J. Bacteriol.">
        <title>The complex bet promoters of Escherichia coli: regulation by oxygen (ArcA), choline (BetI), and osmotic stress.</title>
        <authorList>
            <person name="Lamark T."/>
            <person name="Rokenes T.P."/>
            <person name="McDougall J."/>
            <person name="Strom A.R."/>
        </authorList>
    </citation>
    <scope>FUNCTION</scope>
    <scope>DISRUPTION PHENOTYPE</scope>
</reference>
<reference key="6">
    <citation type="journal article" date="1996" name="J. Bacteriol.">
        <title>DNA-binding properties of the BetI repressor protein of Escherichia coli: the inducer choline stimulates BetI-DNA complex formation.</title>
        <authorList>
            <person name="Rkenes T.P."/>
            <person name="Lamark T."/>
            <person name="Strom A.R."/>
        </authorList>
    </citation>
    <scope>FUNCTION</scope>
    <scope>INDUCTION</scope>
</reference>
<comment type="function">
    <text evidence="2 3">Repressor involved in the biosynthesis of the osmoprotectant glycine betaine. It represses transcription of the choline transporter BetT and the genes of BetAB involved in the synthesis of glycine betaine.</text>
</comment>
<comment type="pathway">
    <text>Amine and polyamine biosynthesis; betaine biosynthesis via choline pathway [regulation].</text>
</comment>
<comment type="induction">
    <text evidence="3">Negatively autoregulated.</text>
</comment>
<comment type="disruption phenotype">
    <text evidence="2">In cells lacking this gene, expression of the bet promoters is stimulated by osmotic stress but not by choline.</text>
</comment>
<comment type="miscellaneous">
    <text evidence="5">BetI is an unusual repressor because it remains bound to DNA during induction.</text>
</comment>
<comment type="sequence caution" evidence="4">
    <conflict type="erroneous initiation">
        <sequence resource="EMBL-CDS" id="AAB18039"/>
    </conflict>
    <text>Extended N-terminus.</text>
</comment>
<proteinExistence type="evidence at transcript level"/>
<name>BETI_ECOLI</name>
<dbReference type="EMBL" id="X52905">
    <property type="protein sequence ID" value="CAA37091.1"/>
    <property type="molecule type" value="Genomic_DNA"/>
</dbReference>
<dbReference type="EMBL" id="U73857">
    <property type="protein sequence ID" value="AAB18039.1"/>
    <property type="status" value="ALT_INIT"/>
    <property type="molecule type" value="Genomic_DNA"/>
</dbReference>
<dbReference type="EMBL" id="U00096">
    <property type="protein sequence ID" value="AAC73416.1"/>
    <property type="molecule type" value="Genomic_DNA"/>
</dbReference>
<dbReference type="EMBL" id="AP009048">
    <property type="protein sequence ID" value="BAE76096.1"/>
    <property type="molecule type" value="Genomic_DNA"/>
</dbReference>
<dbReference type="PIR" id="S15180">
    <property type="entry name" value="S10899"/>
</dbReference>
<dbReference type="RefSeq" id="NP_414847.3">
    <property type="nucleotide sequence ID" value="NC_000913.3"/>
</dbReference>
<dbReference type="RefSeq" id="WP_001335745.1">
    <property type="nucleotide sequence ID" value="NZ_SSZK01000067.1"/>
</dbReference>
<dbReference type="SMR" id="P17446"/>
<dbReference type="BioGRID" id="4262808">
    <property type="interactions" value="87"/>
</dbReference>
<dbReference type="BioGRID" id="849378">
    <property type="interactions" value="1"/>
</dbReference>
<dbReference type="FunCoup" id="P17446">
    <property type="interactions" value="170"/>
</dbReference>
<dbReference type="IntAct" id="P17446">
    <property type="interactions" value="10"/>
</dbReference>
<dbReference type="STRING" id="511145.b0313"/>
<dbReference type="PaxDb" id="511145-b0313"/>
<dbReference type="EnsemblBacteria" id="AAC73416">
    <property type="protein sequence ID" value="AAC73416"/>
    <property type="gene ID" value="b0313"/>
</dbReference>
<dbReference type="GeneID" id="944981"/>
<dbReference type="KEGG" id="ecj:JW0305"/>
<dbReference type="KEGG" id="eco:b0313"/>
<dbReference type="KEGG" id="ecoc:C3026_01530"/>
<dbReference type="KEGG" id="ecoc:C3026_24705"/>
<dbReference type="PATRIC" id="fig|1411691.4.peg.1964"/>
<dbReference type="EchoBASE" id="EB0109"/>
<dbReference type="eggNOG" id="COG1309">
    <property type="taxonomic scope" value="Bacteria"/>
</dbReference>
<dbReference type="HOGENOM" id="CLU_069356_15_4_6"/>
<dbReference type="InParanoid" id="P17446"/>
<dbReference type="OMA" id="EMEVWFA"/>
<dbReference type="OrthoDB" id="7618612at2"/>
<dbReference type="PhylomeDB" id="P17446"/>
<dbReference type="BioCyc" id="EcoCyc:PD00251"/>
<dbReference type="UniPathway" id="UPA00529"/>
<dbReference type="PRO" id="PR:P17446"/>
<dbReference type="Proteomes" id="UP000000625">
    <property type="component" value="Chromosome"/>
</dbReference>
<dbReference type="GO" id="GO:0003677">
    <property type="term" value="F:DNA binding"/>
    <property type="evidence" value="ECO:0000314"/>
    <property type="project" value="EcoCyc"/>
</dbReference>
<dbReference type="GO" id="GO:0003700">
    <property type="term" value="F:DNA-binding transcription factor activity"/>
    <property type="evidence" value="ECO:0000318"/>
    <property type="project" value="GO_Central"/>
</dbReference>
<dbReference type="GO" id="GO:0000976">
    <property type="term" value="F:transcription cis-regulatory region binding"/>
    <property type="evidence" value="ECO:0000318"/>
    <property type="project" value="GO_Central"/>
</dbReference>
<dbReference type="GO" id="GO:0019285">
    <property type="term" value="P:glycine betaine biosynthetic process from choline"/>
    <property type="evidence" value="ECO:0007669"/>
    <property type="project" value="UniProtKB-UniRule"/>
</dbReference>
<dbReference type="GO" id="GO:0045892">
    <property type="term" value="P:negative regulation of DNA-templated transcription"/>
    <property type="evidence" value="ECO:0000270"/>
    <property type="project" value="EcoCyc"/>
</dbReference>
<dbReference type="GO" id="GO:0006355">
    <property type="term" value="P:regulation of DNA-templated transcription"/>
    <property type="evidence" value="ECO:0000318"/>
    <property type="project" value="GO_Central"/>
</dbReference>
<dbReference type="GO" id="GO:0006970">
    <property type="term" value="P:response to osmotic stress"/>
    <property type="evidence" value="ECO:0000270"/>
    <property type="project" value="EcoCyc"/>
</dbReference>
<dbReference type="FunFam" id="1.10.357.10:FF:000009">
    <property type="entry name" value="HTH-type transcriptional regulator BetI"/>
    <property type="match status" value="1"/>
</dbReference>
<dbReference type="Gene3D" id="1.10.357.10">
    <property type="entry name" value="Tetracycline Repressor, domain 2"/>
    <property type="match status" value="1"/>
</dbReference>
<dbReference type="HAMAP" id="MF_00768">
    <property type="entry name" value="HTH_type_BetI"/>
    <property type="match status" value="1"/>
</dbReference>
<dbReference type="InterPro" id="IPR039538">
    <property type="entry name" value="BetI_C"/>
</dbReference>
<dbReference type="InterPro" id="IPR023772">
    <property type="entry name" value="DNA-bd_HTH_TetR-type_CS"/>
</dbReference>
<dbReference type="InterPro" id="IPR009057">
    <property type="entry name" value="Homeodomain-like_sf"/>
</dbReference>
<dbReference type="InterPro" id="IPR050109">
    <property type="entry name" value="HTH-type_TetR-like_transc_reg"/>
</dbReference>
<dbReference type="InterPro" id="IPR001647">
    <property type="entry name" value="HTH_TetR"/>
</dbReference>
<dbReference type="InterPro" id="IPR036271">
    <property type="entry name" value="Tet_transcr_reg_TetR-rel_C_sf"/>
</dbReference>
<dbReference type="InterPro" id="IPR017757">
    <property type="entry name" value="Tscrpt_rep_BetI"/>
</dbReference>
<dbReference type="NCBIfam" id="TIGR03384">
    <property type="entry name" value="betaine_BetI"/>
    <property type="match status" value="1"/>
</dbReference>
<dbReference type="NCBIfam" id="NF001978">
    <property type="entry name" value="PRK00767.1"/>
    <property type="match status" value="1"/>
</dbReference>
<dbReference type="PANTHER" id="PTHR30055:SF234">
    <property type="entry name" value="HTH-TYPE TRANSCRIPTIONAL REGULATOR BETI"/>
    <property type="match status" value="1"/>
</dbReference>
<dbReference type="PANTHER" id="PTHR30055">
    <property type="entry name" value="HTH-TYPE TRANSCRIPTIONAL REGULATOR RUTR"/>
    <property type="match status" value="1"/>
</dbReference>
<dbReference type="Pfam" id="PF13977">
    <property type="entry name" value="TetR_C_6"/>
    <property type="match status" value="1"/>
</dbReference>
<dbReference type="Pfam" id="PF00440">
    <property type="entry name" value="TetR_N"/>
    <property type="match status" value="1"/>
</dbReference>
<dbReference type="PRINTS" id="PR00455">
    <property type="entry name" value="HTHTETR"/>
</dbReference>
<dbReference type="SUPFAM" id="SSF46689">
    <property type="entry name" value="Homeodomain-like"/>
    <property type="match status" value="1"/>
</dbReference>
<dbReference type="SUPFAM" id="SSF48498">
    <property type="entry name" value="Tetracyclin repressor-like, C-terminal domain"/>
    <property type="match status" value="1"/>
</dbReference>
<dbReference type="PROSITE" id="PS01081">
    <property type="entry name" value="HTH_TETR_1"/>
    <property type="match status" value="1"/>
</dbReference>
<dbReference type="PROSITE" id="PS50977">
    <property type="entry name" value="HTH_TETR_2"/>
    <property type="match status" value="1"/>
</dbReference>
<organism>
    <name type="scientific">Escherichia coli (strain K12)</name>
    <dbReference type="NCBI Taxonomy" id="83333"/>
    <lineage>
        <taxon>Bacteria</taxon>
        <taxon>Pseudomonadati</taxon>
        <taxon>Pseudomonadota</taxon>
        <taxon>Gammaproteobacteria</taxon>
        <taxon>Enterobacterales</taxon>
        <taxon>Enterobacteriaceae</taxon>
        <taxon>Escherichia</taxon>
    </lineage>
</organism>
<gene>
    <name evidence="1" type="primary">betI</name>
    <name type="ordered locus">b0313</name>
    <name type="ordered locus">JW0305</name>
</gene>
<accession>P17446</accession>
<accession>Q2MCB0</accession>
<protein>
    <recommendedName>
        <fullName evidence="1">HTH-type transcriptional regulator BetI</fullName>
    </recommendedName>
</protein>
<evidence type="ECO:0000255" key="1">
    <source>
        <dbReference type="HAMAP-Rule" id="MF_00768"/>
    </source>
</evidence>
<evidence type="ECO:0000269" key="2">
    <source>
    </source>
</evidence>
<evidence type="ECO:0000269" key="3">
    <source>
    </source>
</evidence>
<evidence type="ECO:0000305" key="4"/>
<evidence type="ECO:0000305" key="5">
    <source>
    </source>
</evidence>
<sequence>MPKLGMQSIRRRQLIDATLEAINEVGMHDATIAQIARRAGVSTGIISHYFRDKNGLLEATMRDITSQLRDAVLNRLHALPQGSAEQRLQAIVGGNFDETQVSSAAMKAWLAFWASSMHQPMLYRLQQVSSRRLLSNLVSEFRRELPREQAQEAGYGLAALIDGLWLRAALSGKPLDKTRANSLTRHFITQHLPTD</sequence>
<keyword id="KW-0238">DNA-binding</keyword>
<keyword id="KW-1185">Reference proteome</keyword>
<keyword id="KW-0678">Repressor</keyword>
<keyword id="KW-0804">Transcription</keyword>
<keyword id="KW-0805">Transcription regulation</keyword>
<feature type="chain" id="PRO_0000070580" description="HTH-type transcriptional regulator BetI">
    <location>
        <begin position="1"/>
        <end position="195"/>
    </location>
</feature>
<feature type="domain" description="HTH tetR-type" evidence="1">
    <location>
        <begin position="8"/>
        <end position="68"/>
    </location>
</feature>
<feature type="DNA-binding region" description="H-T-H motif" evidence="1">
    <location>
        <begin position="31"/>
        <end position="50"/>
    </location>
</feature>